<feature type="chain" id="PRO_0000269389" description="Large ribosomal subunit protein bL21">
    <location>
        <begin position="1"/>
        <end position="104"/>
    </location>
</feature>
<proteinExistence type="inferred from homology"/>
<accession>Q8DYV3</accession>
<keyword id="KW-1185">Reference proteome</keyword>
<keyword id="KW-0687">Ribonucleoprotein</keyword>
<keyword id="KW-0689">Ribosomal protein</keyword>
<keyword id="KW-0694">RNA-binding</keyword>
<keyword id="KW-0699">rRNA-binding</keyword>
<reference key="1">
    <citation type="journal article" date="2002" name="Proc. Natl. Acad. Sci. U.S.A.">
        <title>Complete genome sequence and comparative genomic analysis of an emerging human pathogen, serotype V Streptococcus agalactiae.</title>
        <authorList>
            <person name="Tettelin H."/>
            <person name="Masignani V."/>
            <person name="Cieslewicz M.J."/>
            <person name="Eisen J.A."/>
            <person name="Peterson S.N."/>
            <person name="Wessels M.R."/>
            <person name="Paulsen I.T."/>
            <person name="Nelson K.E."/>
            <person name="Margarit I."/>
            <person name="Read T.D."/>
            <person name="Madoff L.C."/>
            <person name="Wolf A.M."/>
            <person name="Beanan M.J."/>
            <person name="Brinkac L.M."/>
            <person name="Daugherty S.C."/>
            <person name="DeBoy R.T."/>
            <person name="Durkin A.S."/>
            <person name="Kolonay J.F."/>
            <person name="Madupu R."/>
            <person name="Lewis M.R."/>
            <person name="Radune D."/>
            <person name="Fedorova N.B."/>
            <person name="Scanlan D."/>
            <person name="Khouri H.M."/>
            <person name="Mulligan S."/>
            <person name="Carty H.A."/>
            <person name="Cline R.T."/>
            <person name="Van Aken S.E."/>
            <person name="Gill J."/>
            <person name="Scarselli M."/>
            <person name="Mora M."/>
            <person name="Iacobini E.T."/>
            <person name="Brettoni C."/>
            <person name="Galli G."/>
            <person name="Mariani M."/>
            <person name="Vegni F."/>
            <person name="Maione D."/>
            <person name="Rinaudo D."/>
            <person name="Rappuoli R."/>
            <person name="Telford J.L."/>
            <person name="Kasper D.L."/>
            <person name="Grandi G."/>
            <person name="Fraser C.M."/>
        </authorList>
    </citation>
    <scope>NUCLEOTIDE SEQUENCE [LARGE SCALE GENOMIC DNA]</scope>
    <source>
        <strain>ATCC BAA-611 / 2603 V/R</strain>
    </source>
</reference>
<protein>
    <recommendedName>
        <fullName evidence="1">Large ribosomal subunit protein bL21</fullName>
    </recommendedName>
    <alternativeName>
        <fullName evidence="2">50S ribosomal protein L21</fullName>
    </alternativeName>
</protein>
<dbReference type="EMBL" id="AE009948">
    <property type="protein sequence ID" value="AAN00241.1"/>
    <property type="molecule type" value="Genomic_DNA"/>
</dbReference>
<dbReference type="RefSeq" id="NP_688368.1">
    <property type="nucleotide sequence ID" value="NC_004116.1"/>
</dbReference>
<dbReference type="RefSeq" id="WP_000109135.1">
    <property type="nucleotide sequence ID" value="NC_004116.1"/>
</dbReference>
<dbReference type="SMR" id="Q8DYV3"/>
<dbReference type="STRING" id="208435.SAG1370"/>
<dbReference type="GeneID" id="66886236"/>
<dbReference type="KEGG" id="sag:SAG1370"/>
<dbReference type="PATRIC" id="fig|208435.3.peg.1378"/>
<dbReference type="HOGENOM" id="CLU_061463_3_1_9"/>
<dbReference type="OrthoDB" id="9813334at2"/>
<dbReference type="Proteomes" id="UP000000821">
    <property type="component" value="Chromosome"/>
</dbReference>
<dbReference type="GO" id="GO:0005737">
    <property type="term" value="C:cytoplasm"/>
    <property type="evidence" value="ECO:0007669"/>
    <property type="project" value="UniProtKB-ARBA"/>
</dbReference>
<dbReference type="GO" id="GO:1990904">
    <property type="term" value="C:ribonucleoprotein complex"/>
    <property type="evidence" value="ECO:0007669"/>
    <property type="project" value="UniProtKB-KW"/>
</dbReference>
<dbReference type="GO" id="GO:0005840">
    <property type="term" value="C:ribosome"/>
    <property type="evidence" value="ECO:0007669"/>
    <property type="project" value="UniProtKB-KW"/>
</dbReference>
<dbReference type="GO" id="GO:0019843">
    <property type="term" value="F:rRNA binding"/>
    <property type="evidence" value="ECO:0007669"/>
    <property type="project" value="UniProtKB-UniRule"/>
</dbReference>
<dbReference type="GO" id="GO:0003735">
    <property type="term" value="F:structural constituent of ribosome"/>
    <property type="evidence" value="ECO:0007669"/>
    <property type="project" value="InterPro"/>
</dbReference>
<dbReference type="GO" id="GO:0006412">
    <property type="term" value="P:translation"/>
    <property type="evidence" value="ECO:0007669"/>
    <property type="project" value="UniProtKB-UniRule"/>
</dbReference>
<dbReference type="HAMAP" id="MF_01363">
    <property type="entry name" value="Ribosomal_bL21"/>
    <property type="match status" value="1"/>
</dbReference>
<dbReference type="InterPro" id="IPR028909">
    <property type="entry name" value="bL21-like"/>
</dbReference>
<dbReference type="InterPro" id="IPR036164">
    <property type="entry name" value="bL21-like_sf"/>
</dbReference>
<dbReference type="InterPro" id="IPR001787">
    <property type="entry name" value="Ribosomal_bL21"/>
</dbReference>
<dbReference type="InterPro" id="IPR018258">
    <property type="entry name" value="Ribosomal_bL21_CS"/>
</dbReference>
<dbReference type="NCBIfam" id="TIGR00061">
    <property type="entry name" value="L21"/>
    <property type="match status" value="1"/>
</dbReference>
<dbReference type="PANTHER" id="PTHR21349">
    <property type="entry name" value="50S RIBOSOMAL PROTEIN L21"/>
    <property type="match status" value="1"/>
</dbReference>
<dbReference type="PANTHER" id="PTHR21349:SF0">
    <property type="entry name" value="LARGE RIBOSOMAL SUBUNIT PROTEIN BL21M"/>
    <property type="match status" value="1"/>
</dbReference>
<dbReference type="Pfam" id="PF00829">
    <property type="entry name" value="Ribosomal_L21p"/>
    <property type="match status" value="1"/>
</dbReference>
<dbReference type="SUPFAM" id="SSF141091">
    <property type="entry name" value="L21p-like"/>
    <property type="match status" value="1"/>
</dbReference>
<dbReference type="PROSITE" id="PS01169">
    <property type="entry name" value="RIBOSOMAL_L21"/>
    <property type="match status" value="1"/>
</dbReference>
<comment type="function">
    <text evidence="1">This protein binds to 23S rRNA in the presence of protein L20.</text>
</comment>
<comment type="subunit">
    <text evidence="1">Part of the 50S ribosomal subunit. Contacts protein L20.</text>
</comment>
<comment type="similarity">
    <text evidence="1">Belongs to the bacterial ribosomal protein bL21 family.</text>
</comment>
<sequence length="104" mass="11201">MSTYAIIKTGGKQVKVEVGQAIYVEKLDVEAGAEVTFNEVVLVGGETTKVGTPVVEGATVVGTVEKQGKQKKVVSYKYKPKKGSHRKQGHRQPYTKVVINAINA</sequence>
<organism>
    <name type="scientific">Streptococcus agalactiae serotype V (strain ATCC BAA-611 / 2603 V/R)</name>
    <dbReference type="NCBI Taxonomy" id="208435"/>
    <lineage>
        <taxon>Bacteria</taxon>
        <taxon>Bacillati</taxon>
        <taxon>Bacillota</taxon>
        <taxon>Bacilli</taxon>
        <taxon>Lactobacillales</taxon>
        <taxon>Streptococcaceae</taxon>
        <taxon>Streptococcus</taxon>
    </lineage>
</organism>
<gene>
    <name evidence="1" type="primary">rplU</name>
    <name type="ordered locus">SAG1370</name>
</gene>
<evidence type="ECO:0000255" key="1">
    <source>
        <dbReference type="HAMAP-Rule" id="MF_01363"/>
    </source>
</evidence>
<evidence type="ECO:0000305" key="2"/>
<name>RL21_STRA5</name>